<dbReference type="EMBL" id="AK006606">
    <property type="protein sequence ID" value="BAB24671.1"/>
    <property type="molecule type" value="mRNA"/>
</dbReference>
<dbReference type="EMBL" id="AC156400">
    <property type="status" value="NOT_ANNOTATED_CDS"/>
    <property type="molecule type" value="Genomic_DNA"/>
</dbReference>
<dbReference type="EMBL" id="CH466533">
    <property type="protein sequence ID" value="EDL13502.1"/>
    <property type="molecule type" value="Genomic_DNA"/>
</dbReference>
<dbReference type="EMBL" id="BC048592">
    <property type="protein sequence ID" value="AAH48592.1"/>
    <property type="molecule type" value="mRNA"/>
</dbReference>
<dbReference type="CCDS" id="CCDS20054.1"/>
<dbReference type="RefSeq" id="NP_083947.1">
    <property type="nucleotide sequence ID" value="NM_029671.2"/>
</dbReference>
<dbReference type="BioGRID" id="218200">
    <property type="interactions" value="1"/>
</dbReference>
<dbReference type="FunCoup" id="Q9D9P8">
    <property type="interactions" value="1"/>
</dbReference>
<dbReference type="STRING" id="10090.ENSMUSP00000031900"/>
<dbReference type="PaxDb" id="10090-ENSMUSP00000031900"/>
<dbReference type="Antibodypedia" id="50550">
    <property type="antibodies" value="53 antibodies from 7 providers"/>
</dbReference>
<dbReference type="Ensembl" id="ENSMUST00000031900.6">
    <property type="protein sequence ID" value="ENSMUSP00000031900.6"/>
    <property type="gene ID" value="ENSMUSG00000029867.6"/>
</dbReference>
<dbReference type="GeneID" id="76606"/>
<dbReference type="KEGG" id="mmu:76606"/>
<dbReference type="UCSC" id="uc009bqe.1">
    <property type="organism name" value="mouse"/>
</dbReference>
<dbReference type="AGR" id="MGI:1923856"/>
<dbReference type="CTD" id="135927"/>
<dbReference type="MGI" id="MGI:1923856">
    <property type="gene designation" value="Llcfc1"/>
</dbReference>
<dbReference type="VEuPathDB" id="HostDB:ENSMUSG00000029867"/>
<dbReference type="eggNOG" id="ENOG502SF8S">
    <property type="taxonomic scope" value="Eukaryota"/>
</dbReference>
<dbReference type="GeneTree" id="ENSGT00390000018785"/>
<dbReference type="HOGENOM" id="CLU_1969769_0_0_1"/>
<dbReference type="InParanoid" id="Q9D9P8"/>
<dbReference type="OMA" id="HFMASSV"/>
<dbReference type="OrthoDB" id="9836289at2759"/>
<dbReference type="PhylomeDB" id="Q9D9P8"/>
<dbReference type="TreeFam" id="TF338373"/>
<dbReference type="BioGRID-ORCS" id="76606">
    <property type="hits" value="0 hits in 77 CRISPR screens"/>
</dbReference>
<dbReference type="PRO" id="PR:Q9D9P8"/>
<dbReference type="Proteomes" id="UP000000589">
    <property type="component" value="Chromosome 6"/>
</dbReference>
<dbReference type="RNAct" id="Q9D9P8">
    <property type="molecule type" value="protein"/>
</dbReference>
<dbReference type="Bgee" id="ENSMUSG00000029867">
    <property type="expression patterns" value="Expressed in spermatid and 11 other cell types or tissues"/>
</dbReference>
<dbReference type="GO" id="GO:0005576">
    <property type="term" value="C:extracellular region"/>
    <property type="evidence" value="ECO:0007669"/>
    <property type="project" value="UniProtKB-SubCell"/>
</dbReference>
<dbReference type="GO" id="GO:0007342">
    <property type="term" value="P:fusion of sperm to egg plasma membrane involved in single fertilization"/>
    <property type="evidence" value="ECO:0000315"/>
    <property type="project" value="UniProtKB"/>
</dbReference>
<dbReference type="InterPro" id="IPR031684">
    <property type="entry name" value="LLCFC1"/>
</dbReference>
<dbReference type="PANTHER" id="PTHR37348">
    <property type="entry name" value="LLLL AND CFNLAS MOTIF-CONTAINING PROTEIN 1"/>
    <property type="match status" value="1"/>
</dbReference>
<dbReference type="PANTHER" id="PTHR37348:SF1">
    <property type="entry name" value="SPERM-EGG FUSION PROTEIN LLCFC1"/>
    <property type="match status" value="1"/>
</dbReference>
<dbReference type="Pfam" id="PF15838">
    <property type="entry name" value="LLCFC1"/>
    <property type="match status" value="1"/>
</dbReference>
<gene>
    <name evidence="7" type="primary">Llcfc1</name>
    <name evidence="5" type="synonym">Sof1</name>
</gene>
<evidence type="ECO:0000250" key="1">
    <source>
        <dbReference type="UniProtKB" id="Q96L11"/>
    </source>
</evidence>
<evidence type="ECO:0000255" key="2"/>
<evidence type="ECO:0000256" key="3">
    <source>
        <dbReference type="SAM" id="MobiDB-lite"/>
    </source>
</evidence>
<evidence type="ECO:0000269" key="4">
    <source>
    </source>
</evidence>
<evidence type="ECO:0000303" key="5">
    <source>
    </source>
</evidence>
<evidence type="ECO:0000305" key="6"/>
<evidence type="ECO:0000312" key="7">
    <source>
        <dbReference type="MGI" id="MGI:1923856"/>
    </source>
</evidence>
<keyword id="KW-0278">Fertilization</keyword>
<keyword id="KW-1185">Reference proteome</keyword>
<keyword id="KW-0964">Secreted</keyword>
<keyword id="KW-0732">Signal</keyword>
<name>LCFC1_MOUSE</name>
<organism>
    <name type="scientific">Mus musculus</name>
    <name type="common">Mouse</name>
    <dbReference type="NCBI Taxonomy" id="10090"/>
    <lineage>
        <taxon>Eukaryota</taxon>
        <taxon>Metazoa</taxon>
        <taxon>Chordata</taxon>
        <taxon>Craniata</taxon>
        <taxon>Vertebrata</taxon>
        <taxon>Euteleostomi</taxon>
        <taxon>Mammalia</taxon>
        <taxon>Eutheria</taxon>
        <taxon>Euarchontoglires</taxon>
        <taxon>Glires</taxon>
        <taxon>Rodentia</taxon>
        <taxon>Myomorpha</taxon>
        <taxon>Muroidea</taxon>
        <taxon>Muridae</taxon>
        <taxon>Murinae</taxon>
        <taxon>Mus</taxon>
        <taxon>Mus</taxon>
    </lineage>
</organism>
<sequence length="108" mass="12138">MTSLGSQLHRATFLTALLLLLLLQVKGVKTLIVSASLDGDKSQKDKVSSEDQGEEEYEEHFEASSEGEQWQEIDMVQQEDTISQAITLQDHLLDLAFCFNLASIMFFL</sequence>
<protein>
    <recommendedName>
        <fullName evidence="6">Sperm-egg fusion protein LLCFC1</fullName>
    </recommendedName>
    <alternativeName>
        <fullName evidence="1">LLLL and CFNLAS motif-containing protein 1</fullName>
    </alternativeName>
    <alternativeName>
        <fullName evidence="1">MSSP-binding protein CTM-1</fullName>
    </alternativeName>
    <alternativeName>
        <fullName evidence="5">Sperm-oocyte fusion required protein 1</fullName>
    </alternativeName>
</protein>
<comment type="function">
    <text evidence="4">Sperm protein required for fusion of sperm with the egg membrane during fertilization.</text>
</comment>
<comment type="subcellular location">
    <subcellularLocation>
        <location evidence="6">Secreted</location>
    </subcellularLocation>
</comment>
<comment type="tissue specificity">
    <text evidence="4">Detected in testicular germ cells and spermatozoa (at protein level). Abundantly expressed in testis.</text>
</comment>
<comment type="developmental stage">
    <text evidence="4">Detected in the testis after postnatal day 28.</text>
</comment>
<comment type="disruption phenotype">
    <text evidence="4">Male infertility (PubMed:32393636). Sperm are morphologically normal, exhibit normal motility and can penetrate the zona pellucida but are unable to fuse with the egg membrane (PubMed:32393636). No effect on amount or localization of sperm-egg fusion protein IZUMO1 (PubMed:32393636).</text>
</comment>
<reference key="1">
    <citation type="journal article" date="2005" name="Science">
        <title>The transcriptional landscape of the mammalian genome.</title>
        <authorList>
            <person name="Carninci P."/>
            <person name="Kasukawa T."/>
            <person name="Katayama S."/>
            <person name="Gough J."/>
            <person name="Frith M.C."/>
            <person name="Maeda N."/>
            <person name="Oyama R."/>
            <person name="Ravasi T."/>
            <person name="Lenhard B."/>
            <person name="Wells C."/>
            <person name="Kodzius R."/>
            <person name="Shimokawa K."/>
            <person name="Bajic V.B."/>
            <person name="Brenner S.E."/>
            <person name="Batalov S."/>
            <person name="Forrest A.R."/>
            <person name="Zavolan M."/>
            <person name="Davis M.J."/>
            <person name="Wilming L.G."/>
            <person name="Aidinis V."/>
            <person name="Allen J.E."/>
            <person name="Ambesi-Impiombato A."/>
            <person name="Apweiler R."/>
            <person name="Aturaliya R.N."/>
            <person name="Bailey T.L."/>
            <person name="Bansal M."/>
            <person name="Baxter L."/>
            <person name="Beisel K.W."/>
            <person name="Bersano T."/>
            <person name="Bono H."/>
            <person name="Chalk A.M."/>
            <person name="Chiu K.P."/>
            <person name="Choudhary V."/>
            <person name="Christoffels A."/>
            <person name="Clutterbuck D.R."/>
            <person name="Crowe M.L."/>
            <person name="Dalla E."/>
            <person name="Dalrymple B.P."/>
            <person name="de Bono B."/>
            <person name="Della Gatta G."/>
            <person name="di Bernardo D."/>
            <person name="Down T."/>
            <person name="Engstrom P."/>
            <person name="Fagiolini M."/>
            <person name="Faulkner G."/>
            <person name="Fletcher C.F."/>
            <person name="Fukushima T."/>
            <person name="Furuno M."/>
            <person name="Futaki S."/>
            <person name="Gariboldi M."/>
            <person name="Georgii-Hemming P."/>
            <person name="Gingeras T.R."/>
            <person name="Gojobori T."/>
            <person name="Green R.E."/>
            <person name="Gustincich S."/>
            <person name="Harbers M."/>
            <person name="Hayashi Y."/>
            <person name="Hensch T.K."/>
            <person name="Hirokawa N."/>
            <person name="Hill D."/>
            <person name="Huminiecki L."/>
            <person name="Iacono M."/>
            <person name="Ikeo K."/>
            <person name="Iwama A."/>
            <person name="Ishikawa T."/>
            <person name="Jakt M."/>
            <person name="Kanapin A."/>
            <person name="Katoh M."/>
            <person name="Kawasawa Y."/>
            <person name="Kelso J."/>
            <person name="Kitamura H."/>
            <person name="Kitano H."/>
            <person name="Kollias G."/>
            <person name="Krishnan S.P."/>
            <person name="Kruger A."/>
            <person name="Kummerfeld S.K."/>
            <person name="Kurochkin I.V."/>
            <person name="Lareau L.F."/>
            <person name="Lazarevic D."/>
            <person name="Lipovich L."/>
            <person name="Liu J."/>
            <person name="Liuni S."/>
            <person name="McWilliam S."/>
            <person name="Madan Babu M."/>
            <person name="Madera M."/>
            <person name="Marchionni L."/>
            <person name="Matsuda H."/>
            <person name="Matsuzawa S."/>
            <person name="Miki H."/>
            <person name="Mignone F."/>
            <person name="Miyake S."/>
            <person name="Morris K."/>
            <person name="Mottagui-Tabar S."/>
            <person name="Mulder N."/>
            <person name="Nakano N."/>
            <person name="Nakauchi H."/>
            <person name="Ng P."/>
            <person name="Nilsson R."/>
            <person name="Nishiguchi S."/>
            <person name="Nishikawa S."/>
            <person name="Nori F."/>
            <person name="Ohara O."/>
            <person name="Okazaki Y."/>
            <person name="Orlando V."/>
            <person name="Pang K.C."/>
            <person name="Pavan W.J."/>
            <person name="Pavesi G."/>
            <person name="Pesole G."/>
            <person name="Petrovsky N."/>
            <person name="Piazza S."/>
            <person name="Reed J."/>
            <person name="Reid J.F."/>
            <person name="Ring B.Z."/>
            <person name="Ringwald M."/>
            <person name="Rost B."/>
            <person name="Ruan Y."/>
            <person name="Salzberg S.L."/>
            <person name="Sandelin A."/>
            <person name="Schneider C."/>
            <person name="Schoenbach C."/>
            <person name="Sekiguchi K."/>
            <person name="Semple C.A."/>
            <person name="Seno S."/>
            <person name="Sessa L."/>
            <person name="Sheng Y."/>
            <person name="Shibata Y."/>
            <person name="Shimada H."/>
            <person name="Shimada K."/>
            <person name="Silva D."/>
            <person name="Sinclair B."/>
            <person name="Sperling S."/>
            <person name="Stupka E."/>
            <person name="Sugiura K."/>
            <person name="Sultana R."/>
            <person name="Takenaka Y."/>
            <person name="Taki K."/>
            <person name="Tammoja K."/>
            <person name="Tan S.L."/>
            <person name="Tang S."/>
            <person name="Taylor M.S."/>
            <person name="Tegner J."/>
            <person name="Teichmann S.A."/>
            <person name="Ueda H.R."/>
            <person name="van Nimwegen E."/>
            <person name="Verardo R."/>
            <person name="Wei C.L."/>
            <person name="Yagi K."/>
            <person name="Yamanishi H."/>
            <person name="Zabarovsky E."/>
            <person name="Zhu S."/>
            <person name="Zimmer A."/>
            <person name="Hide W."/>
            <person name="Bult C."/>
            <person name="Grimmond S.M."/>
            <person name="Teasdale R.D."/>
            <person name="Liu E.T."/>
            <person name="Brusic V."/>
            <person name="Quackenbush J."/>
            <person name="Wahlestedt C."/>
            <person name="Mattick J.S."/>
            <person name="Hume D.A."/>
            <person name="Kai C."/>
            <person name="Sasaki D."/>
            <person name="Tomaru Y."/>
            <person name="Fukuda S."/>
            <person name="Kanamori-Katayama M."/>
            <person name="Suzuki M."/>
            <person name="Aoki J."/>
            <person name="Arakawa T."/>
            <person name="Iida J."/>
            <person name="Imamura K."/>
            <person name="Itoh M."/>
            <person name="Kato T."/>
            <person name="Kawaji H."/>
            <person name="Kawagashira N."/>
            <person name="Kawashima T."/>
            <person name="Kojima M."/>
            <person name="Kondo S."/>
            <person name="Konno H."/>
            <person name="Nakano K."/>
            <person name="Ninomiya N."/>
            <person name="Nishio T."/>
            <person name="Okada M."/>
            <person name="Plessy C."/>
            <person name="Shibata K."/>
            <person name="Shiraki T."/>
            <person name="Suzuki S."/>
            <person name="Tagami M."/>
            <person name="Waki K."/>
            <person name="Watahiki A."/>
            <person name="Okamura-Oho Y."/>
            <person name="Suzuki H."/>
            <person name="Kawai J."/>
            <person name="Hayashizaki Y."/>
        </authorList>
    </citation>
    <scope>NUCLEOTIDE SEQUENCE [LARGE SCALE MRNA]</scope>
    <source>
        <strain>C57BL/6J</strain>
        <tissue>Testis</tissue>
    </source>
</reference>
<reference key="2">
    <citation type="journal article" date="2009" name="PLoS Biol.">
        <title>Lineage-specific biology revealed by a finished genome assembly of the mouse.</title>
        <authorList>
            <person name="Church D.M."/>
            <person name="Goodstadt L."/>
            <person name="Hillier L.W."/>
            <person name="Zody M.C."/>
            <person name="Goldstein S."/>
            <person name="She X."/>
            <person name="Bult C.J."/>
            <person name="Agarwala R."/>
            <person name="Cherry J.L."/>
            <person name="DiCuccio M."/>
            <person name="Hlavina W."/>
            <person name="Kapustin Y."/>
            <person name="Meric P."/>
            <person name="Maglott D."/>
            <person name="Birtle Z."/>
            <person name="Marques A.C."/>
            <person name="Graves T."/>
            <person name="Zhou S."/>
            <person name="Teague B."/>
            <person name="Potamousis K."/>
            <person name="Churas C."/>
            <person name="Place M."/>
            <person name="Herschleb J."/>
            <person name="Runnheim R."/>
            <person name="Forrest D."/>
            <person name="Amos-Landgraf J."/>
            <person name="Schwartz D.C."/>
            <person name="Cheng Z."/>
            <person name="Lindblad-Toh K."/>
            <person name="Eichler E.E."/>
            <person name="Ponting C.P."/>
        </authorList>
    </citation>
    <scope>NUCLEOTIDE SEQUENCE [LARGE SCALE GENOMIC DNA]</scope>
    <source>
        <strain>C57BL/6J</strain>
    </source>
</reference>
<reference key="3">
    <citation type="submission" date="2005-09" db="EMBL/GenBank/DDBJ databases">
        <authorList>
            <person name="Mural R.J."/>
            <person name="Adams M.D."/>
            <person name="Myers E.W."/>
            <person name="Smith H.O."/>
            <person name="Venter J.C."/>
        </authorList>
    </citation>
    <scope>NUCLEOTIDE SEQUENCE [LARGE SCALE GENOMIC DNA]</scope>
</reference>
<reference key="4">
    <citation type="journal article" date="2004" name="Genome Res.">
        <title>The status, quality, and expansion of the NIH full-length cDNA project: the Mammalian Gene Collection (MGC).</title>
        <authorList>
            <consortium name="The MGC Project Team"/>
        </authorList>
    </citation>
    <scope>NUCLEOTIDE SEQUENCE [LARGE SCALE MRNA]</scope>
    <source>
        <tissue>Testis</tissue>
    </source>
</reference>
<reference key="5">
    <citation type="journal article" date="2020" name="Proc. Natl. Acad. Sci. U.S.A.">
        <title>Sperm proteins SOF1, TMEM95, and SPACA6 are required for sperm-oocyte fusion in mice.</title>
        <authorList>
            <person name="Noda T."/>
            <person name="Lu Y."/>
            <person name="Fujihara Y."/>
            <person name="Oura S."/>
            <person name="Koyano T."/>
            <person name="Kobayashi S."/>
            <person name="Matzuk M.M."/>
            <person name="Ikawa M."/>
        </authorList>
    </citation>
    <scope>FUNCTION</scope>
    <scope>TISSUE SPECIFICITY</scope>
    <scope>DEVELOPMENTAL STAGE</scope>
    <scope>DISRUPTION PHENOTYPE</scope>
</reference>
<accession>Q9D9P8</accession>
<proteinExistence type="evidence at protein level"/>
<feature type="signal peptide" evidence="2">
    <location>
        <begin position="1"/>
        <end position="30"/>
    </location>
</feature>
<feature type="chain" id="PRO_0000352881" description="Sperm-egg fusion protein LLCFC1">
    <location>
        <begin position="31"/>
        <end position="108"/>
    </location>
</feature>
<feature type="region of interest" description="Disordered" evidence="3">
    <location>
        <begin position="39"/>
        <end position="64"/>
    </location>
</feature>
<feature type="compositionally biased region" description="Basic and acidic residues" evidence="3">
    <location>
        <begin position="39"/>
        <end position="49"/>
    </location>
</feature>